<feature type="chain" id="PRO_0000119303" description="Transcription initiation factor IIB">
    <location>
        <begin position="1"/>
        <end position="312"/>
    </location>
</feature>
<feature type="repeat" description="1">
    <location>
        <begin position="115"/>
        <end position="192"/>
    </location>
</feature>
<feature type="repeat" description="2">
    <location>
        <begin position="216"/>
        <end position="290"/>
    </location>
</feature>
<feature type="zinc finger region" description="TFIIB-type" evidence="2">
    <location>
        <begin position="2"/>
        <end position="34"/>
    </location>
</feature>
<feature type="binding site" evidence="2">
    <location>
        <position position="6"/>
    </location>
    <ligand>
        <name>Zn(2+)</name>
        <dbReference type="ChEBI" id="CHEBI:29105"/>
    </ligand>
</feature>
<feature type="binding site" evidence="2">
    <location>
        <position position="9"/>
    </location>
    <ligand>
        <name>Zn(2+)</name>
        <dbReference type="ChEBI" id="CHEBI:29105"/>
    </ligand>
</feature>
<feature type="binding site" evidence="2">
    <location>
        <position position="26"/>
    </location>
    <ligand>
        <name>Zn(2+)</name>
        <dbReference type="ChEBI" id="CHEBI:29105"/>
    </ligand>
</feature>
<feature type="binding site" evidence="2">
    <location>
        <position position="29"/>
    </location>
    <ligand>
        <name>Zn(2+)</name>
        <dbReference type="ChEBI" id="CHEBI:29105"/>
    </ligand>
</feature>
<organism>
    <name type="scientific">Oryza sativa subsp. japonica</name>
    <name type="common">Rice</name>
    <dbReference type="NCBI Taxonomy" id="39947"/>
    <lineage>
        <taxon>Eukaryota</taxon>
        <taxon>Viridiplantae</taxon>
        <taxon>Streptophyta</taxon>
        <taxon>Embryophyta</taxon>
        <taxon>Tracheophyta</taxon>
        <taxon>Spermatophyta</taxon>
        <taxon>Magnoliopsida</taxon>
        <taxon>Liliopsida</taxon>
        <taxon>Poales</taxon>
        <taxon>Poaceae</taxon>
        <taxon>BOP clade</taxon>
        <taxon>Oryzoideae</taxon>
        <taxon>Oryzeae</taxon>
        <taxon>Oryzinae</taxon>
        <taxon>Oryza</taxon>
        <taxon>Oryza sativa</taxon>
    </lineage>
</organism>
<gene>
    <name type="primary">TFIIB</name>
    <name type="ordered locus">Os09g0534800</name>
    <name type="ordered locus">LOC_Os09g36440</name>
    <name type="ORF">OJ1112_E07.31</name>
    <name type="ORF">P0569E11.1</name>
</gene>
<reference key="1">
    <citation type="journal article" date="2002" name="Plant Cell">
        <title>Rice TATA binding protein interacts functionally with transcription factor IIB and the RF2a bZIP transcriptional activator in an enhanced plant in vitro transcription system.</title>
        <authorList>
            <person name="Zhu Q."/>
            <person name="Ordiz M.I."/>
            <person name="Dabi T."/>
            <person name="Beachy R.N."/>
            <person name="Lamb C."/>
        </authorList>
    </citation>
    <scope>NUCLEOTIDE SEQUENCE [MRNA]</scope>
    <scope>FUNCTION</scope>
    <scope>INTERACTION WITH TBP2</scope>
</reference>
<reference key="2">
    <citation type="journal article" date="2005" name="Nature">
        <title>The map-based sequence of the rice genome.</title>
        <authorList>
            <consortium name="International rice genome sequencing project (IRGSP)"/>
        </authorList>
    </citation>
    <scope>NUCLEOTIDE SEQUENCE [LARGE SCALE GENOMIC DNA]</scope>
    <source>
        <strain>cv. Nipponbare</strain>
    </source>
</reference>
<reference key="3">
    <citation type="journal article" date="2013" name="Rice">
        <title>Improvement of the Oryza sativa Nipponbare reference genome using next generation sequence and optical map data.</title>
        <authorList>
            <person name="Kawahara Y."/>
            <person name="de la Bastide M."/>
            <person name="Hamilton J.P."/>
            <person name="Kanamori H."/>
            <person name="McCombie W.R."/>
            <person name="Ouyang S."/>
            <person name="Schwartz D.C."/>
            <person name="Tanaka T."/>
            <person name="Wu J."/>
            <person name="Zhou S."/>
            <person name="Childs K.L."/>
            <person name="Davidson R.M."/>
            <person name="Lin H."/>
            <person name="Quesada-Ocampo L."/>
            <person name="Vaillancourt B."/>
            <person name="Sakai H."/>
            <person name="Lee S.S."/>
            <person name="Kim J."/>
            <person name="Numa H."/>
            <person name="Itoh T."/>
            <person name="Buell C.R."/>
            <person name="Matsumoto T."/>
        </authorList>
    </citation>
    <scope>GENOME REANNOTATION</scope>
    <source>
        <strain>cv. Nipponbare</strain>
    </source>
</reference>
<evidence type="ECO:0000250" key="1">
    <source>
        <dbReference type="UniProtKB" id="Q00403"/>
    </source>
</evidence>
<evidence type="ECO:0000255" key="2">
    <source>
        <dbReference type="PROSITE-ProRule" id="PRU00469"/>
    </source>
</evidence>
<evidence type="ECO:0000269" key="3">
    <source>
    </source>
</evidence>
<evidence type="ECO:0000305" key="4"/>
<comment type="function">
    <text evidence="3">General factor that plays a major role in the activation of eukaryotic genes transcribed by RNA polymerase II.</text>
</comment>
<comment type="subunit">
    <text evidence="1 3">Associates with TFIID-IIA (DA complex) to form TFIID-IIA-IIB (DAB-complex) which is then recognized by polymerase II (By similarity). Interacts with TBP2 (PubMed:11971135).</text>
</comment>
<comment type="subcellular location">
    <subcellularLocation>
        <location evidence="4">Nucleus</location>
    </subcellularLocation>
</comment>
<comment type="similarity">
    <text evidence="4">Belongs to the TFIIB family.</text>
</comment>
<accession>Q8W0W3</accession>
<accession>Q69K01</accession>
<proteinExistence type="evidence at protein level"/>
<dbReference type="EMBL" id="AF464908">
    <property type="protein sequence ID" value="AAL73491.1"/>
    <property type="molecule type" value="mRNA"/>
</dbReference>
<dbReference type="EMBL" id="AP005092">
    <property type="protein sequence ID" value="BAD33339.1"/>
    <property type="molecule type" value="Genomic_DNA"/>
</dbReference>
<dbReference type="EMBL" id="AP006067">
    <property type="protein sequence ID" value="BAD34211.1"/>
    <property type="molecule type" value="Genomic_DNA"/>
</dbReference>
<dbReference type="EMBL" id="AP014965">
    <property type="protein sequence ID" value="BAT09136.1"/>
    <property type="molecule type" value="Genomic_DNA"/>
</dbReference>
<dbReference type="RefSeq" id="XP_015651154.1">
    <property type="nucleotide sequence ID" value="XM_015795668.1"/>
</dbReference>
<dbReference type="SMR" id="Q8W0W3"/>
<dbReference type="FunCoup" id="Q8W0W3">
    <property type="interactions" value="2372"/>
</dbReference>
<dbReference type="STRING" id="39947.Q8W0W3"/>
<dbReference type="PaxDb" id="39947-Q8W0W3"/>
<dbReference type="EnsemblPlants" id="Os09t0534800-01">
    <property type="protein sequence ID" value="Os09t0534800-01"/>
    <property type="gene ID" value="Os09g0534800"/>
</dbReference>
<dbReference type="Gramene" id="Os09t0534800-01">
    <property type="protein sequence ID" value="Os09t0534800-01"/>
    <property type="gene ID" value="Os09g0534800"/>
</dbReference>
<dbReference type="eggNOG" id="KOG1597">
    <property type="taxonomic scope" value="Eukaryota"/>
</dbReference>
<dbReference type="HOGENOM" id="CLU_043736_1_1_1"/>
<dbReference type="InParanoid" id="Q8W0W3"/>
<dbReference type="OMA" id="DHDQRMK"/>
<dbReference type="OrthoDB" id="25790at2759"/>
<dbReference type="Proteomes" id="UP000000763">
    <property type="component" value="Chromosome 9"/>
</dbReference>
<dbReference type="Proteomes" id="UP000059680">
    <property type="component" value="Chromosome 9"/>
</dbReference>
<dbReference type="ExpressionAtlas" id="Q8W0W3">
    <property type="expression patterns" value="baseline and differential"/>
</dbReference>
<dbReference type="GO" id="GO:0005634">
    <property type="term" value="C:nucleus"/>
    <property type="evidence" value="ECO:0000318"/>
    <property type="project" value="GO_Central"/>
</dbReference>
<dbReference type="GO" id="GO:0097550">
    <property type="term" value="C:transcription preinitiation complex"/>
    <property type="evidence" value="ECO:0000318"/>
    <property type="project" value="GO_Central"/>
</dbReference>
<dbReference type="GO" id="GO:0016251">
    <property type="term" value="F:RNA polymerase II general transcription initiation factor activity"/>
    <property type="evidence" value="ECO:0000318"/>
    <property type="project" value="GO_Central"/>
</dbReference>
<dbReference type="GO" id="GO:0017025">
    <property type="term" value="F:TBP-class protein binding"/>
    <property type="evidence" value="ECO:0000318"/>
    <property type="project" value="GO_Central"/>
</dbReference>
<dbReference type="GO" id="GO:0008270">
    <property type="term" value="F:zinc ion binding"/>
    <property type="evidence" value="ECO:0007669"/>
    <property type="project" value="UniProtKB-KW"/>
</dbReference>
<dbReference type="GO" id="GO:0006352">
    <property type="term" value="P:DNA-templated transcription initiation"/>
    <property type="evidence" value="ECO:0000318"/>
    <property type="project" value="GO_Central"/>
</dbReference>
<dbReference type="GO" id="GO:0070897">
    <property type="term" value="P:transcription preinitiation complex assembly"/>
    <property type="evidence" value="ECO:0007669"/>
    <property type="project" value="InterPro"/>
</dbReference>
<dbReference type="CDD" id="cd20551">
    <property type="entry name" value="CYCLIN_TFIIB_rpt1"/>
    <property type="match status" value="1"/>
</dbReference>
<dbReference type="FunFam" id="1.10.472.10:FF:000043">
    <property type="entry name" value="Transcription initiation factor IIB"/>
    <property type="match status" value="1"/>
</dbReference>
<dbReference type="FunFam" id="1.10.472.170:FF:000002">
    <property type="entry name" value="Transcription initiation factor IIB"/>
    <property type="match status" value="1"/>
</dbReference>
<dbReference type="FunFam" id="1.10.472.10:FF:000019">
    <property type="entry name" value="transcription initiation factor IIB"/>
    <property type="match status" value="1"/>
</dbReference>
<dbReference type="Gene3D" id="1.10.472.170">
    <property type="match status" value="1"/>
</dbReference>
<dbReference type="Gene3D" id="1.10.472.10">
    <property type="entry name" value="Cyclin-like"/>
    <property type="match status" value="1"/>
</dbReference>
<dbReference type="InterPro" id="IPR013763">
    <property type="entry name" value="Cyclin-like_dom"/>
</dbReference>
<dbReference type="InterPro" id="IPR036915">
    <property type="entry name" value="Cyclin-like_sf"/>
</dbReference>
<dbReference type="InterPro" id="IPR000812">
    <property type="entry name" value="TFIIB"/>
</dbReference>
<dbReference type="InterPro" id="IPR023486">
    <property type="entry name" value="TFIIB_CS"/>
</dbReference>
<dbReference type="InterPro" id="IPR013150">
    <property type="entry name" value="TFIIB_cyclin"/>
</dbReference>
<dbReference type="InterPro" id="IPR013137">
    <property type="entry name" value="Znf_TFIIB"/>
</dbReference>
<dbReference type="PANTHER" id="PTHR11618:SF80">
    <property type="entry name" value="TRANSCRIPTION INITIATION FACTOR IIB"/>
    <property type="match status" value="1"/>
</dbReference>
<dbReference type="PANTHER" id="PTHR11618">
    <property type="entry name" value="TRANSCRIPTION INITIATION FACTOR IIB-RELATED"/>
    <property type="match status" value="1"/>
</dbReference>
<dbReference type="Pfam" id="PF00382">
    <property type="entry name" value="TFIIB"/>
    <property type="match status" value="2"/>
</dbReference>
<dbReference type="Pfam" id="PF08271">
    <property type="entry name" value="Zn_Ribbon_TF"/>
    <property type="match status" value="1"/>
</dbReference>
<dbReference type="PRINTS" id="PR00685">
    <property type="entry name" value="TIFACTORIIB"/>
</dbReference>
<dbReference type="SMART" id="SM00385">
    <property type="entry name" value="CYCLIN"/>
    <property type="match status" value="2"/>
</dbReference>
<dbReference type="SUPFAM" id="SSF47954">
    <property type="entry name" value="Cyclin-like"/>
    <property type="match status" value="2"/>
</dbReference>
<dbReference type="SUPFAM" id="SSF57783">
    <property type="entry name" value="Zinc beta-ribbon"/>
    <property type="match status" value="1"/>
</dbReference>
<dbReference type="PROSITE" id="PS00782">
    <property type="entry name" value="TFIIB"/>
    <property type="match status" value="1"/>
</dbReference>
<dbReference type="PROSITE" id="PS51134">
    <property type="entry name" value="ZF_TFIIB"/>
    <property type="match status" value="1"/>
</dbReference>
<keyword id="KW-0479">Metal-binding</keyword>
<keyword id="KW-0539">Nucleus</keyword>
<keyword id="KW-1185">Reference proteome</keyword>
<keyword id="KW-0677">Repeat</keyword>
<keyword id="KW-0804">Transcription</keyword>
<keyword id="KW-0805">Transcription regulation</keyword>
<keyword id="KW-0862">Zinc</keyword>
<keyword id="KW-0863">Zinc-finger</keyword>
<name>TF2B_ORYSJ</name>
<protein>
    <recommendedName>
        <fullName>Transcription initiation factor IIB</fullName>
    </recommendedName>
    <alternativeName>
        <fullName>General transcription factor TFIIB</fullName>
    </alternativeName>
</protein>
<sequence length="312" mass="34298">MSDSFCPDCKKHTEVAFDHSAGDTVCTECGLVLEAHSVDETSEWRTFANESSDNDPVRVGGPTNPLLTDGGLSTVIAKPNGAQGEFLSSSLGRWQNRGSNPDRSLILAFRTIANMADRLGLVATIKDRANEIYKKVEDLKSIRGRNQDAILAACLYIACRQEDRPRTVKEICSVANGATKKEIGRAKEFIVKQLEVEMGQSMEMGTIHAGDFLRRFCSTLGMNNQAVKAAQEAVQRSEELDIRRSPISIAAAVIYMITQLSDDKKPLKDISLATGVAEGTIRNSYKDLYPYASRLIPNTYAKEEDLKNLCTP</sequence>